<gene>
    <name type="primary">Asip</name>
    <name type="synonym">a</name>
</gene>
<accession>Q03288</accession>
<accession>A2ALT3</accession>
<accession>Q80ST0</accession>
<keyword id="KW-1015">Disulfide bond</keyword>
<keyword id="KW-0325">Glycoprotein</keyword>
<keyword id="KW-0960">Knottin</keyword>
<keyword id="KW-1185">Reference proteome</keyword>
<keyword id="KW-0964">Secreted</keyword>
<keyword id="KW-0732">Signal</keyword>
<comment type="function">
    <text evidence="5">Involved in the regulation of melanogenesis. The binding of ASP to MC1R precludes alpha-MSH initiated signaling and thus blocks production of cAMP, leading to a down-regulation of eumelanogenesis (brown/black pigment) and thus increasing synthesis of pheomelanin (yellow/red pigment). Causes hair follicle melanocytes to synthesize phaeomelanin instead of black or brown pigment eumelanin and produces hairs with a subapical yellow band on an otherwise black or brown background when expressed during the mid-portion of hair growth.</text>
</comment>
<comment type="subcellular location">
    <subcellularLocation>
        <location evidence="5">Secreted</location>
    </subcellularLocation>
</comment>
<comment type="tissue specificity">
    <text>Epithelial cells of the hair follicles and the epidermis.</text>
</comment>
<comment type="developmental stage">
    <text>Widely expressed in embryonic and neonatal skin.</text>
</comment>
<comment type="domain">
    <text evidence="1">The presence of a 'disulfide through disulfide knot' structurally defines this protein as a knottin.</text>
</comment>
<dbReference type="EMBL" id="L06451">
    <property type="protein sequence ID" value="AAA37201.1"/>
    <property type="molecule type" value="mRNA"/>
</dbReference>
<dbReference type="EMBL" id="L06941">
    <property type="status" value="NOT_ANNOTATED_CDS"/>
    <property type="molecule type" value="mRNA"/>
</dbReference>
<dbReference type="EMBL" id="AL805955">
    <property type="status" value="NOT_ANNOTATED_CDS"/>
    <property type="molecule type" value="Genomic_DNA"/>
</dbReference>
<dbReference type="EMBL" id="CH466551">
    <property type="protein sequence ID" value="EDL06105.1"/>
    <property type="molecule type" value="Genomic_DNA"/>
</dbReference>
<dbReference type="EMBL" id="CH466551">
    <property type="protein sequence ID" value="EDL06106.1"/>
    <property type="molecule type" value="Genomic_DNA"/>
</dbReference>
<dbReference type="EMBL" id="BC009122">
    <property type="status" value="NOT_ANNOTATED_CDS"/>
    <property type="molecule type" value="mRNA"/>
</dbReference>
<dbReference type="EMBL" id="S63413">
    <property type="protein sequence ID" value="AAA15908.1"/>
    <property type="molecule type" value="mRNA"/>
</dbReference>
<dbReference type="EMBL" id="S70320">
    <property type="protein sequence ID" value="AAP19635.1"/>
    <property type="molecule type" value="mRNA"/>
</dbReference>
<dbReference type="EMBL" id="S70326">
    <property type="protein sequence ID" value="AAP19636.1"/>
    <property type="molecule type" value="mRNA"/>
</dbReference>
<dbReference type="EMBL" id="S70394">
    <property type="protein sequence ID" value="AAP19637.1"/>
    <property type="molecule type" value="mRNA"/>
</dbReference>
<dbReference type="EMBL" id="S74479">
    <property type="protein sequence ID" value="AAP31517.1"/>
    <property type="molecule type" value="mRNA"/>
</dbReference>
<dbReference type="EMBL" id="S74489">
    <property type="protein sequence ID" value="AAP31519.1"/>
    <property type="molecule type" value="mRNA"/>
</dbReference>
<dbReference type="EMBL" id="S74493">
    <property type="protein sequence ID" value="AAP31520.1"/>
    <property type="molecule type" value="mRNA"/>
</dbReference>
<dbReference type="CCDS" id="CCDS16941.1"/>
<dbReference type="PIR" id="A46298">
    <property type="entry name" value="A46298"/>
</dbReference>
<dbReference type="RefSeq" id="NP_056585.2">
    <property type="nucleotide sequence ID" value="NM_015770.3"/>
</dbReference>
<dbReference type="SMR" id="Q03288"/>
<dbReference type="FunCoup" id="Q03288">
    <property type="interactions" value="508"/>
</dbReference>
<dbReference type="STRING" id="10090.ENSMUSP00000029123"/>
<dbReference type="GlyCosmos" id="Q03288">
    <property type="glycosylation" value="1 site, No reported glycans"/>
</dbReference>
<dbReference type="GlyGen" id="Q03288">
    <property type="glycosylation" value="1 site"/>
</dbReference>
<dbReference type="iPTMnet" id="Q03288"/>
<dbReference type="PhosphoSitePlus" id="Q03288"/>
<dbReference type="PaxDb" id="10090-ENSMUSP00000029123"/>
<dbReference type="ProteomicsDB" id="277077"/>
<dbReference type="Antibodypedia" id="25783">
    <property type="antibodies" value="82 antibodies from 15 providers"/>
</dbReference>
<dbReference type="DNASU" id="50518"/>
<dbReference type="Ensembl" id="ENSMUST00000029123.3">
    <property type="protein sequence ID" value="ENSMUSP00000029123.3"/>
    <property type="gene ID" value="ENSMUSG00000027596.11"/>
</dbReference>
<dbReference type="Ensembl" id="ENSMUST00000109697.8">
    <property type="protein sequence ID" value="ENSMUSP00000105319.2"/>
    <property type="gene ID" value="ENSMUSG00000027596.11"/>
</dbReference>
<dbReference type="GeneID" id="50518"/>
<dbReference type="KEGG" id="mmu:50518"/>
<dbReference type="UCSC" id="uc008njz.1">
    <property type="organism name" value="mouse"/>
</dbReference>
<dbReference type="AGR" id="MGI:87853"/>
<dbReference type="CTD" id="50518"/>
<dbReference type="MGI" id="MGI:87853">
    <property type="gene designation" value="a"/>
</dbReference>
<dbReference type="VEuPathDB" id="HostDB:ENSMUSG00000027596"/>
<dbReference type="eggNOG" id="ENOG502S5XF">
    <property type="taxonomic scope" value="Eukaryota"/>
</dbReference>
<dbReference type="GeneTree" id="ENSGT00940000154258"/>
<dbReference type="HOGENOM" id="CLU_138633_0_0_1"/>
<dbReference type="InParanoid" id="Q03288"/>
<dbReference type="OMA" id="CHCRFFR"/>
<dbReference type="OrthoDB" id="8717782at2759"/>
<dbReference type="TreeFam" id="TF330729"/>
<dbReference type="BioGRID-ORCS" id="50518">
    <property type="hits" value="2 hits in 77 CRISPR screens"/>
</dbReference>
<dbReference type="ChiTaRS" id="a">
    <property type="organism name" value="mouse"/>
</dbReference>
<dbReference type="PRO" id="PR:Q03288"/>
<dbReference type="Proteomes" id="UP000000589">
    <property type="component" value="Chromosome 2"/>
</dbReference>
<dbReference type="RNAct" id="Q03288">
    <property type="molecule type" value="protein"/>
</dbReference>
<dbReference type="Bgee" id="ENSMUSG00000027596">
    <property type="expression patterns" value="Expressed in spermatocyte and 40 other cell types or tissues"/>
</dbReference>
<dbReference type="ExpressionAtlas" id="Q03288">
    <property type="expression patterns" value="baseline and differential"/>
</dbReference>
<dbReference type="GO" id="GO:0005615">
    <property type="term" value="C:extracellular space"/>
    <property type="evidence" value="ECO:0000250"/>
    <property type="project" value="UniProtKB"/>
</dbReference>
<dbReference type="GO" id="GO:0031779">
    <property type="term" value="F:melanocortin receptor binding"/>
    <property type="evidence" value="ECO:0000353"/>
    <property type="project" value="MGI"/>
</dbReference>
<dbReference type="GO" id="GO:0031781">
    <property type="term" value="F:type 3 melanocortin receptor binding"/>
    <property type="evidence" value="ECO:0000353"/>
    <property type="project" value="MGI"/>
</dbReference>
<dbReference type="GO" id="GO:0031782">
    <property type="term" value="F:type 4 melanocortin receptor binding"/>
    <property type="evidence" value="ECO:0000353"/>
    <property type="project" value="MGI"/>
</dbReference>
<dbReference type="GO" id="GO:0008343">
    <property type="term" value="P:adult feeding behavior"/>
    <property type="evidence" value="ECO:0000315"/>
    <property type="project" value="MGI"/>
</dbReference>
<dbReference type="GO" id="GO:0044725">
    <property type="term" value="P:epigenetic programming in the zygotic pronuclei"/>
    <property type="evidence" value="ECO:0000315"/>
    <property type="project" value="MGI"/>
</dbReference>
<dbReference type="GO" id="GO:0040029">
    <property type="term" value="P:epigenetic regulation of gene expression"/>
    <property type="evidence" value="ECO:0000315"/>
    <property type="project" value="MGI"/>
</dbReference>
<dbReference type="GO" id="GO:0006091">
    <property type="term" value="P:generation of precursor metabolites and energy"/>
    <property type="evidence" value="ECO:0000316"/>
    <property type="project" value="MGI"/>
</dbReference>
<dbReference type="GO" id="GO:0009755">
    <property type="term" value="P:hormone-mediated signaling pathway"/>
    <property type="evidence" value="ECO:0007669"/>
    <property type="project" value="InterPro"/>
</dbReference>
<dbReference type="GO" id="GO:0042438">
    <property type="term" value="P:melanin biosynthetic process"/>
    <property type="evidence" value="ECO:0000314"/>
    <property type="project" value="UniProtKB"/>
</dbReference>
<dbReference type="GO" id="GO:0032438">
    <property type="term" value="P:melanosome organization"/>
    <property type="evidence" value="ECO:0000315"/>
    <property type="project" value="MGI"/>
</dbReference>
<dbReference type="GO" id="GO:0032402">
    <property type="term" value="P:melanosome transport"/>
    <property type="evidence" value="ECO:0000315"/>
    <property type="project" value="MGI"/>
</dbReference>
<dbReference type="GO" id="GO:0043473">
    <property type="term" value="P:pigmentation"/>
    <property type="evidence" value="ECO:0000315"/>
    <property type="project" value="MGI"/>
</dbReference>
<dbReference type="GO" id="GO:0048023">
    <property type="term" value="P:positive regulation of melanin biosynthetic process"/>
    <property type="evidence" value="ECO:0000316"/>
    <property type="project" value="CACAO"/>
</dbReference>
<dbReference type="Gene3D" id="4.10.760.10">
    <property type="entry name" value="Agouti domain"/>
    <property type="match status" value="1"/>
</dbReference>
<dbReference type="InterPro" id="IPR007733">
    <property type="entry name" value="Agouti"/>
</dbReference>
<dbReference type="InterPro" id="IPR027300">
    <property type="entry name" value="Agouti_dom"/>
</dbReference>
<dbReference type="InterPro" id="IPR036836">
    <property type="entry name" value="Agouti_dom_sf"/>
</dbReference>
<dbReference type="PANTHER" id="PTHR16551">
    <property type="entry name" value="AGOUTI RELATED"/>
    <property type="match status" value="1"/>
</dbReference>
<dbReference type="PANTHER" id="PTHR16551:SF1">
    <property type="entry name" value="AGOUTI-SIGNALING PROTEIN"/>
    <property type="match status" value="1"/>
</dbReference>
<dbReference type="Pfam" id="PF05039">
    <property type="entry name" value="Agouti"/>
    <property type="match status" value="1"/>
</dbReference>
<dbReference type="SMART" id="SM00792">
    <property type="entry name" value="Agouti"/>
    <property type="match status" value="1"/>
</dbReference>
<dbReference type="SUPFAM" id="SSF57055">
    <property type="entry name" value="Agouti-related protein"/>
    <property type="match status" value="1"/>
</dbReference>
<dbReference type="PROSITE" id="PS60024">
    <property type="entry name" value="AGOUTI_1"/>
    <property type="match status" value="1"/>
</dbReference>
<dbReference type="PROSITE" id="PS51150">
    <property type="entry name" value="AGOUTI_2"/>
    <property type="match status" value="1"/>
</dbReference>
<reference key="1">
    <citation type="journal article" date="1993" name="Genes Dev.">
        <title>Cloning of the mouse agouti gene predicts a secreted protein ubiquitously expressed in mice carrying the lethal yellow mutation.</title>
        <authorList>
            <person name="Miller M.W."/>
            <person name="Duhl D.M."/>
            <person name="Vrieling H."/>
            <person name="Cordes S.P."/>
            <person name="Ollmann M.M."/>
            <person name="Winkes B.M."/>
            <person name="Barsh G.S."/>
        </authorList>
    </citation>
    <scope>NUCLEOTIDE SEQUENCE [MRNA]</scope>
    <scope>SUBCELLULAR LOCATION</scope>
    <scope>FUNCTION</scope>
</reference>
<reference key="2">
    <citation type="journal article" date="1992" name="Cell">
        <title>Molecular characterization of the mouse agouti locus.</title>
        <authorList>
            <person name="Bultman S.J."/>
            <person name="Michaud E.J."/>
            <person name="Woychik R.P."/>
        </authorList>
    </citation>
    <scope>NUCLEOTIDE SEQUENCE [MRNA]</scope>
</reference>
<reference key="3">
    <citation type="journal article" date="2009" name="PLoS Biol.">
        <title>Lineage-specific biology revealed by a finished genome assembly of the mouse.</title>
        <authorList>
            <person name="Church D.M."/>
            <person name="Goodstadt L."/>
            <person name="Hillier L.W."/>
            <person name="Zody M.C."/>
            <person name="Goldstein S."/>
            <person name="She X."/>
            <person name="Bult C.J."/>
            <person name="Agarwala R."/>
            <person name="Cherry J.L."/>
            <person name="DiCuccio M."/>
            <person name="Hlavina W."/>
            <person name="Kapustin Y."/>
            <person name="Meric P."/>
            <person name="Maglott D."/>
            <person name="Birtle Z."/>
            <person name="Marques A.C."/>
            <person name="Graves T."/>
            <person name="Zhou S."/>
            <person name="Teague B."/>
            <person name="Potamousis K."/>
            <person name="Churas C."/>
            <person name="Place M."/>
            <person name="Herschleb J."/>
            <person name="Runnheim R."/>
            <person name="Forrest D."/>
            <person name="Amos-Landgraf J."/>
            <person name="Schwartz D.C."/>
            <person name="Cheng Z."/>
            <person name="Lindblad-Toh K."/>
            <person name="Eichler E.E."/>
            <person name="Ponting C.P."/>
        </authorList>
    </citation>
    <scope>NUCLEOTIDE SEQUENCE [LARGE SCALE GENOMIC DNA]</scope>
    <source>
        <strain>C57BL/6J</strain>
    </source>
</reference>
<reference key="4">
    <citation type="submission" date="2005-07" db="EMBL/GenBank/DDBJ databases">
        <authorList>
            <person name="Mural R.J."/>
            <person name="Adams M.D."/>
            <person name="Myers E.W."/>
            <person name="Smith H.O."/>
            <person name="Venter J.C."/>
        </authorList>
    </citation>
    <scope>NUCLEOTIDE SEQUENCE [LARGE SCALE GENOMIC DNA]</scope>
</reference>
<reference key="5">
    <citation type="journal article" date="2004" name="Genome Res.">
        <title>The status, quality, and expansion of the NIH full-length cDNA project: the Mammalian Gene Collection (MGC).</title>
        <authorList>
            <consortium name="The MGC Project Team"/>
        </authorList>
    </citation>
    <scope>NUCLEOTIDE SEQUENCE [LARGE SCALE MRNA]</scope>
    <source>
        <strain>129</strain>
        <tissue>Mammary gland</tissue>
    </source>
</reference>
<reference key="6">
    <citation type="journal article" date="1993" name="Genes Dev.">
        <title>The embryonic lethality of homozygous lethal yellow mice (Ay/Ay) is associated with the disruption of a novel RNA-binding protein.</title>
        <authorList>
            <person name="Michaud E.J."/>
            <person name="Bultman S.J."/>
            <person name="Stubbs L.J."/>
            <person name="Woychik R.P."/>
        </authorList>
    </citation>
    <scope>NUCLEOTIDE SEQUENCE [MRNA] OF 1-70</scope>
</reference>
<reference key="7">
    <citation type="journal article" date="1994" name="Nat. Genet.">
        <title>Neomorphic agouti mutations in obese yellow mice.</title>
        <authorList>
            <person name="Duhl D.M."/>
            <person name="Vrieling H."/>
            <person name="Miller K.A."/>
            <person name="Wolff G.L."/>
            <person name="Barsh G.S."/>
        </authorList>
    </citation>
    <scope>NUCLEOTIDE SEQUENCE [MRNA] OF 1-16</scope>
    <source>
        <strain>C57BL/6J</strain>
        <tissue>Spleen</tissue>
    </source>
</reference>
<reference key="8">
    <citation type="journal article" date="1994" name="Proc. Natl. Acad. Sci. U.S.A.">
        <title>Differences in dorsal and ventral pigmentation result from regional expression of the mouse agouti gene.</title>
        <authorList>
            <person name="Vrieling H."/>
            <person name="Duhl D.M."/>
            <person name="Millar S.E."/>
            <person name="Miller K.A."/>
            <person name="Barsh G.S."/>
        </authorList>
    </citation>
    <scope>NUCLEOTIDE SEQUENCE [MRNA] OF 1-16</scope>
</reference>
<proteinExistence type="evidence at transcript level"/>
<sequence>MDVTRLLLATLVGFLCFFTVHSHLALEETLGDDRSLRSNSSMNSLDFSSVSIVALNKKSKKISRKEAEKRKRSSKKKASMKKVARPPPPSPCVATRDSCKPPAPACCDPCASCQCRFFGSACTCRVLNPNC</sequence>
<name>ASIP_MOUSE</name>
<evidence type="ECO:0000250" key="1"/>
<evidence type="ECO:0000255" key="2"/>
<evidence type="ECO:0000255" key="3">
    <source>
        <dbReference type="PROSITE-ProRule" id="PRU00494"/>
    </source>
</evidence>
<evidence type="ECO:0000256" key="4">
    <source>
        <dbReference type="SAM" id="MobiDB-lite"/>
    </source>
</evidence>
<evidence type="ECO:0000269" key="5">
    <source>
    </source>
</evidence>
<evidence type="ECO:0000305" key="6"/>
<organism>
    <name type="scientific">Mus musculus</name>
    <name type="common">Mouse</name>
    <dbReference type="NCBI Taxonomy" id="10090"/>
    <lineage>
        <taxon>Eukaryota</taxon>
        <taxon>Metazoa</taxon>
        <taxon>Chordata</taxon>
        <taxon>Craniata</taxon>
        <taxon>Vertebrata</taxon>
        <taxon>Euteleostomi</taxon>
        <taxon>Mammalia</taxon>
        <taxon>Eutheria</taxon>
        <taxon>Euarchontoglires</taxon>
        <taxon>Glires</taxon>
        <taxon>Rodentia</taxon>
        <taxon>Myomorpha</taxon>
        <taxon>Muroidea</taxon>
        <taxon>Muridae</taxon>
        <taxon>Murinae</taxon>
        <taxon>Mus</taxon>
        <taxon>Mus</taxon>
    </lineage>
</organism>
<feature type="signal peptide" evidence="2">
    <location>
        <begin position="1"/>
        <end position="22"/>
    </location>
</feature>
<feature type="chain" id="PRO_0000001029" description="Agouti-signaling protein">
    <location>
        <begin position="23"/>
        <end position="131"/>
    </location>
</feature>
<feature type="domain" description="Agouti" evidence="3">
    <location>
        <begin position="92"/>
        <end position="131"/>
    </location>
</feature>
<feature type="region of interest" description="Disordered" evidence="4">
    <location>
        <begin position="58"/>
        <end position="100"/>
    </location>
</feature>
<feature type="compositionally biased region" description="Basic residues" evidence="4">
    <location>
        <begin position="70"/>
        <end position="84"/>
    </location>
</feature>
<feature type="glycosylation site" description="N-linked (GlcNAc...) asparagine" evidence="2">
    <location>
        <position position="39"/>
    </location>
</feature>
<feature type="disulfide bond" evidence="3">
    <location>
        <begin position="92"/>
        <end position="107"/>
    </location>
</feature>
<feature type="disulfide bond" evidence="3">
    <location>
        <begin position="99"/>
        <end position="113"/>
    </location>
</feature>
<feature type="disulfide bond" evidence="3">
    <location>
        <begin position="106"/>
        <end position="124"/>
    </location>
</feature>
<feature type="disulfide bond" evidence="3">
    <location>
        <begin position="110"/>
        <end position="131"/>
    </location>
</feature>
<feature type="disulfide bond" evidence="3">
    <location>
        <begin position="115"/>
        <end position="122"/>
    </location>
</feature>
<feature type="sequence conflict" description="In Ref. 1; AAA37201 and 6; AAA15908/AAP19635/AAP19636/AAP19637/AAP31517/AAP31519/AAP31520." evidence="6" ref="1 6">
    <original>G</original>
    <variation>S</variation>
    <location>
        <position position="13"/>
    </location>
</feature>
<protein>
    <recommendedName>
        <fullName>Agouti-signaling protein</fullName>
        <shortName>ASP</shortName>
    </recommendedName>
    <alternativeName>
        <fullName>Agouti coat color protein</fullName>
    </alternativeName>
    <alternativeName>
        <fullName>Agouti switch protein</fullName>
    </alternativeName>
</protein>